<reference key="1">
    <citation type="submission" date="2006-10" db="EMBL/GenBank/DDBJ databases">
        <authorList>
            <person name="Fleischmann R.D."/>
            <person name="Dodson R.J."/>
            <person name="Haft D.H."/>
            <person name="Merkel J.S."/>
            <person name="Nelson W.C."/>
            <person name="Fraser C.M."/>
        </authorList>
    </citation>
    <scope>NUCLEOTIDE SEQUENCE [LARGE SCALE GENOMIC DNA]</scope>
    <source>
        <strain>ATCC 700084 / mc(2)155</strain>
    </source>
</reference>
<reference key="2">
    <citation type="journal article" date="2007" name="Genome Biol.">
        <title>Interrupted coding sequences in Mycobacterium smegmatis: authentic mutations or sequencing errors?</title>
        <authorList>
            <person name="Deshayes C."/>
            <person name="Perrodou E."/>
            <person name="Gallien S."/>
            <person name="Euphrasie D."/>
            <person name="Schaeffer C."/>
            <person name="Van-Dorsselaer A."/>
            <person name="Poch O."/>
            <person name="Lecompte O."/>
            <person name="Reyrat J.-M."/>
        </authorList>
    </citation>
    <scope>NUCLEOTIDE SEQUENCE [LARGE SCALE GENOMIC DNA]</scope>
    <source>
        <strain>ATCC 700084 / mc(2)155</strain>
    </source>
</reference>
<reference key="3">
    <citation type="journal article" date="2009" name="Genome Res.">
        <title>Ortho-proteogenomics: multiple proteomes investigation through orthology and a new MS-based protocol.</title>
        <authorList>
            <person name="Gallien S."/>
            <person name="Perrodou E."/>
            <person name="Carapito C."/>
            <person name="Deshayes C."/>
            <person name="Reyrat J.-M."/>
            <person name="Van Dorsselaer A."/>
            <person name="Poch O."/>
            <person name="Schaeffer C."/>
            <person name="Lecompte O."/>
        </authorList>
    </citation>
    <scope>NUCLEOTIDE SEQUENCE [LARGE SCALE GENOMIC DNA]</scope>
    <scope>IDENTIFICATION BY MASS SPECTROMETRY [LARGE SCALE ANALYSIS]</scope>
    <scope>IDENTIFICATION OF N-TERMINUS</scope>
    <source>
        <strain>ATCC 700084 / mc(2)155</strain>
    </source>
</reference>
<name>NAGB_MYCS2</name>
<feature type="chain" id="PRO_1000067004" description="Glucosamine-6-phosphate deaminase">
    <location>
        <begin position="1"/>
        <end position="261"/>
    </location>
</feature>
<feature type="active site" description="Proton acceptor; for enolization step" evidence="1">
    <location>
        <position position="67"/>
    </location>
</feature>
<feature type="active site" description="For ring-opening step" evidence="1">
    <location>
        <position position="136"/>
    </location>
</feature>
<feature type="active site" description="Proton acceptor; for ring-opening step" evidence="1">
    <location>
        <position position="138"/>
    </location>
</feature>
<feature type="active site" description="For ring-opening step" evidence="1">
    <location>
        <position position="143"/>
    </location>
</feature>
<proteinExistence type="evidence at protein level"/>
<comment type="function">
    <text evidence="1">Catalyzes the reversible isomerization-deamination of glucosamine 6-phosphate (GlcN6P) to form fructose 6-phosphate (Fru6P) and ammonium ion.</text>
</comment>
<comment type="catalytic activity">
    <reaction evidence="1">
        <text>alpha-D-glucosamine 6-phosphate + H2O = beta-D-fructose 6-phosphate + NH4(+)</text>
        <dbReference type="Rhea" id="RHEA:12172"/>
        <dbReference type="ChEBI" id="CHEBI:15377"/>
        <dbReference type="ChEBI" id="CHEBI:28938"/>
        <dbReference type="ChEBI" id="CHEBI:57634"/>
        <dbReference type="ChEBI" id="CHEBI:75989"/>
        <dbReference type="EC" id="3.5.99.6"/>
    </reaction>
</comment>
<comment type="pathway">
    <text evidence="1">Amino-sugar metabolism; N-acetylneuraminate degradation; D-fructose 6-phosphate from N-acetylneuraminate: step 5/5.</text>
</comment>
<comment type="similarity">
    <text evidence="1">Belongs to the glucosamine/galactosamine-6-phosphate isomerase family. NagB subfamily.</text>
</comment>
<protein>
    <recommendedName>
        <fullName evidence="1">Glucosamine-6-phosphate deaminase</fullName>
        <ecNumber evidence="1">3.5.99.6</ecNumber>
    </recommendedName>
    <alternativeName>
        <fullName evidence="1">GlcN6P deaminase</fullName>
        <shortName evidence="1">GNPDA</shortName>
    </alternativeName>
    <alternativeName>
        <fullName evidence="1">Glucosamine-6-phosphate isomerase</fullName>
    </alternativeName>
</protein>
<keyword id="KW-0119">Carbohydrate metabolism</keyword>
<keyword id="KW-0378">Hydrolase</keyword>
<keyword id="KW-1185">Reference proteome</keyword>
<accession>A0QU88</accession>
<accession>I7G5R7</accession>
<evidence type="ECO:0000255" key="1">
    <source>
        <dbReference type="HAMAP-Rule" id="MF_01241"/>
    </source>
</evidence>
<sequence>MEVIILPDPGRIGSLAADAITALITRKPDAVLGLATGSSPLAVYDELVSRYEAGQISFRQARGFTLDEYVGLPADHPERYRNVIDTAFAARVDFAPGAVQGPDGLADDIPAACAAYEAAIRDAGGVDLQILGIGTDGHIAFNEPGSSLASRTRIKTLTRQTRVDNARFFGGDLDQVPTHCLTQGLGTIMEARHLILIAMGRSKAEAVHHLVEGAVSAMWPATVLQMHPHVTVLLDDAAAQRLQLVDYYRETYRAKPAWQGI</sequence>
<gene>
    <name evidence="1" type="primary">nagB</name>
    <name type="ordered locus">MSMEG_2118</name>
    <name type="ordered locus">MSMEI_2070</name>
</gene>
<organism>
    <name type="scientific">Mycolicibacterium smegmatis (strain ATCC 700084 / mc(2)155)</name>
    <name type="common">Mycobacterium smegmatis</name>
    <dbReference type="NCBI Taxonomy" id="246196"/>
    <lineage>
        <taxon>Bacteria</taxon>
        <taxon>Bacillati</taxon>
        <taxon>Actinomycetota</taxon>
        <taxon>Actinomycetes</taxon>
        <taxon>Mycobacteriales</taxon>
        <taxon>Mycobacteriaceae</taxon>
        <taxon>Mycolicibacterium</taxon>
    </lineage>
</organism>
<dbReference type="EC" id="3.5.99.6" evidence="1"/>
<dbReference type="EMBL" id="CP000480">
    <property type="protein sequence ID" value="ABK69808.1"/>
    <property type="molecule type" value="Genomic_DNA"/>
</dbReference>
<dbReference type="EMBL" id="CP001663">
    <property type="protein sequence ID" value="AFP38541.1"/>
    <property type="molecule type" value="Genomic_DNA"/>
</dbReference>
<dbReference type="RefSeq" id="WP_011728169.1">
    <property type="nucleotide sequence ID" value="NZ_SIJM01000021.1"/>
</dbReference>
<dbReference type="RefSeq" id="YP_886476.1">
    <property type="nucleotide sequence ID" value="NC_008596.1"/>
</dbReference>
<dbReference type="SMR" id="A0QU88"/>
<dbReference type="STRING" id="246196.MSMEG_2118"/>
<dbReference type="PaxDb" id="246196-MSMEI_2070"/>
<dbReference type="GeneID" id="93456920"/>
<dbReference type="KEGG" id="msb:LJ00_10555"/>
<dbReference type="KEGG" id="msg:MSMEI_2070"/>
<dbReference type="KEGG" id="msm:MSMEG_2118"/>
<dbReference type="PATRIC" id="fig|246196.19.peg.2093"/>
<dbReference type="eggNOG" id="COG0363">
    <property type="taxonomic scope" value="Bacteria"/>
</dbReference>
<dbReference type="OrthoDB" id="9791139at2"/>
<dbReference type="UniPathway" id="UPA00629">
    <property type="reaction ID" value="UER00684"/>
</dbReference>
<dbReference type="Proteomes" id="UP000000757">
    <property type="component" value="Chromosome"/>
</dbReference>
<dbReference type="Proteomes" id="UP000006158">
    <property type="component" value="Chromosome"/>
</dbReference>
<dbReference type="GO" id="GO:0005737">
    <property type="term" value="C:cytoplasm"/>
    <property type="evidence" value="ECO:0007669"/>
    <property type="project" value="TreeGrafter"/>
</dbReference>
<dbReference type="GO" id="GO:0004342">
    <property type="term" value="F:glucosamine-6-phosphate deaminase activity"/>
    <property type="evidence" value="ECO:0007669"/>
    <property type="project" value="UniProtKB-UniRule"/>
</dbReference>
<dbReference type="GO" id="GO:0042802">
    <property type="term" value="F:identical protein binding"/>
    <property type="evidence" value="ECO:0007669"/>
    <property type="project" value="TreeGrafter"/>
</dbReference>
<dbReference type="GO" id="GO:0005975">
    <property type="term" value="P:carbohydrate metabolic process"/>
    <property type="evidence" value="ECO:0007669"/>
    <property type="project" value="InterPro"/>
</dbReference>
<dbReference type="GO" id="GO:0006043">
    <property type="term" value="P:glucosamine catabolic process"/>
    <property type="evidence" value="ECO:0007669"/>
    <property type="project" value="TreeGrafter"/>
</dbReference>
<dbReference type="GO" id="GO:0006046">
    <property type="term" value="P:N-acetylglucosamine catabolic process"/>
    <property type="evidence" value="ECO:0007669"/>
    <property type="project" value="TreeGrafter"/>
</dbReference>
<dbReference type="GO" id="GO:0019262">
    <property type="term" value="P:N-acetylneuraminate catabolic process"/>
    <property type="evidence" value="ECO:0007669"/>
    <property type="project" value="UniProtKB-UniRule"/>
</dbReference>
<dbReference type="CDD" id="cd01399">
    <property type="entry name" value="GlcN6P_deaminase"/>
    <property type="match status" value="1"/>
</dbReference>
<dbReference type="FunFam" id="3.40.50.1360:FF:000003">
    <property type="entry name" value="Glucosamine-6-phosphate deaminase"/>
    <property type="match status" value="1"/>
</dbReference>
<dbReference type="Gene3D" id="3.40.50.1360">
    <property type="match status" value="1"/>
</dbReference>
<dbReference type="HAMAP" id="MF_01241">
    <property type="entry name" value="GlcN6P_deamin"/>
    <property type="match status" value="1"/>
</dbReference>
<dbReference type="InterPro" id="IPR006148">
    <property type="entry name" value="Glc/Gal-6P_isomerase"/>
</dbReference>
<dbReference type="InterPro" id="IPR004547">
    <property type="entry name" value="Glucosamine6P_isomerase"/>
</dbReference>
<dbReference type="InterPro" id="IPR018321">
    <property type="entry name" value="Glucosamine6P_isomerase_CS"/>
</dbReference>
<dbReference type="InterPro" id="IPR037171">
    <property type="entry name" value="NagB/RpiA_transferase-like"/>
</dbReference>
<dbReference type="NCBIfam" id="TIGR00502">
    <property type="entry name" value="nagB"/>
    <property type="match status" value="1"/>
</dbReference>
<dbReference type="NCBIfam" id="NF001684">
    <property type="entry name" value="PRK00443.1-4"/>
    <property type="match status" value="1"/>
</dbReference>
<dbReference type="PANTHER" id="PTHR11280">
    <property type="entry name" value="GLUCOSAMINE-6-PHOSPHATE ISOMERASE"/>
    <property type="match status" value="1"/>
</dbReference>
<dbReference type="PANTHER" id="PTHR11280:SF5">
    <property type="entry name" value="GLUCOSAMINE-6-PHOSPHATE ISOMERASE"/>
    <property type="match status" value="1"/>
</dbReference>
<dbReference type="Pfam" id="PF01182">
    <property type="entry name" value="Glucosamine_iso"/>
    <property type="match status" value="1"/>
</dbReference>
<dbReference type="SUPFAM" id="SSF100950">
    <property type="entry name" value="NagB/RpiA/CoA transferase-like"/>
    <property type="match status" value="1"/>
</dbReference>
<dbReference type="PROSITE" id="PS01161">
    <property type="entry name" value="GLC_GALNAC_ISOMERASE"/>
    <property type="match status" value="1"/>
</dbReference>